<dbReference type="EC" id="2.7.7.56" evidence="1"/>
<dbReference type="EMBL" id="BX548175">
    <property type="protein sequence ID" value="CAE22005.1"/>
    <property type="molecule type" value="Genomic_DNA"/>
</dbReference>
<dbReference type="RefSeq" id="WP_011131197.1">
    <property type="nucleotide sequence ID" value="NC_005071.1"/>
</dbReference>
<dbReference type="SMR" id="Q7V4V8"/>
<dbReference type="KEGG" id="pmt:PMT_1830"/>
<dbReference type="eggNOG" id="COG0689">
    <property type="taxonomic scope" value="Bacteria"/>
</dbReference>
<dbReference type="HOGENOM" id="CLU_050858_0_0_3"/>
<dbReference type="OrthoDB" id="9802265at2"/>
<dbReference type="Proteomes" id="UP000001423">
    <property type="component" value="Chromosome"/>
</dbReference>
<dbReference type="GO" id="GO:0000175">
    <property type="term" value="F:3'-5'-RNA exonuclease activity"/>
    <property type="evidence" value="ECO:0007669"/>
    <property type="project" value="UniProtKB-UniRule"/>
</dbReference>
<dbReference type="GO" id="GO:0000049">
    <property type="term" value="F:tRNA binding"/>
    <property type="evidence" value="ECO:0007669"/>
    <property type="project" value="UniProtKB-UniRule"/>
</dbReference>
<dbReference type="GO" id="GO:0009022">
    <property type="term" value="F:tRNA nucleotidyltransferase activity"/>
    <property type="evidence" value="ECO:0007669"/>
    <property type="project" value="UniProtKB-UniRule"/>
</dbReference>
<dbReference type="GO" id="GO:0016075">
    <property type="term" value="P:rRNA catabolic process"/>
    <property type="evidence" value="ECO:0007669"/>
    <property type="project" value="UniProtKB-UniRule"/>
</dbReference>
<dbReference type="GO" id="GO:0006364">
    <property type="term" value="P:rRNA processing"/>
    <property type="evidence" value="ECO:0007669"/>
    <property type="project" value="UniProtKB-KW"/>
</dbReference>
<dbReference type="GO" id="GO:0008033">
    <property type="term" value="P:tRNA processing"/>
    <property type="evidence" value="ECO:0007669"/>
    <property type="project" value="UniProtKB-UniRule"/>
</dbReference>
<dbReference type="FunFam" id="3.30.230.70:FF:000003">
    <property type="entry name" value="Ribonuclease PH"/>
    <property type="match status" value="1"/>
</dbReference>
<dbReference type="Gene3D" id="3.30.230.70">
    <property type="entry name" value="GHMP Kinase, N-terminal domain"/>
    <property type="match status" value="1"/>
</dbReference>
<dbReference type="HAMAP" id="MF_00564">
    <property type="entry name" value="RNase_PH"/>
    <property type="match status" value="1"/>
</dbReference>
<dbReference type="InterPro" id="IPR001247">
    <property type="entry name" value="ExoRNase_PH_dom1"/>
</dbReference>
<dbReference type="InterPro" id="IPR015847">
    <property type="entry name" value="ExoRNase_PH_dom2"/>
</dbReference>
<dbReference type="InterPro" id="IPR036345">
    <property type="entry name" value="ExoRNase_PH_dom2_sf"/>
</dbReference>
<dbReference type="InterPro" id="IPR027408">
    <property type="entry name" value="PNPase/RNase_PH_dom_sf"/>
</dbReference>
<dbReference type="InterPro" id="IPR020568">
    <property type="entry name" value="Ribosomal_Su5_D2-typ_SF"/>
</dbReference>
<dbReference type="InterPro" id="IPR050080">
    <property type="entry name" value="RNase_PH"/>
</dbReference>
<dbReference type="InterPro" id="IPR002381">
    <property type="entry name" value="RNase_PH_bac-type"/>
</dbReference>
<dbReference type="InterPro" id="IPR018336">
    <property type="entry name" value="RNase_PH_CS"/>
</dbReference>
<dbReference type="NCBIfam" id="TIGR01966">
    <property type="entry name" value="RNasePH"/>
    <property type="match status" value="1"/>
</dbReference>
<dbReference type="PANTHER" id="PTHR11953">
    <property type="entry name" value="EXOSOME COMPLEX COMPONENT"/>
    <property type="match status" value="1"/>
</dbReference>
<dbReference type="PANTHER" id="PTHR11953:SF0">
    <property type="entry name" value="EXOSOME COMPLEX COMPONENT RRP41"/>
    <property type="match status" value="1"/>
</dbReference>
<dbReference type="Pfam" id="PF01138">
    <property type="entry name" value="RNase_PH"/>
    <property type="match status" value="1"/>
</dbReference>
<dbReference type="Pfam" id="PF03725">
    <property type="entry name" value="RNase_PH_C"/>
    <property type="match status" value="1"/>
</dbReference>
<dbReference type="SUPFAM" id="SSF55666">
    <property type="entry name" value="Ribonuclease PH domain 2-like"/>
    <property type="match status" value="1"/>
</dbReference>
<dbReference type="SUPFAM" id="SSF54211">
    <property type="entry name" value="Ribosomal protein S5 domain 2-like"/>
    <property type="match status" value="1"/>
</dbReference>
<dbReference type="PROSITE" id="PS01277">
    <property type="entry name" value="RIBONUCLEASE_PH"/>
    <property type="match status" value="1"/>
</dbReference>
<protein>
    <recommendedName>
        <fullName evidence="1">Ribonuclease PH</fullName>
        <shortName evidence="1">RNase PH</shortName>
        <ecNumber evidence="1">2.7.7.56</ecNumber>
    </recommendedName>
    <alternativeName>
        <fullName evidence="1">tRNA nucleotidyltransferase</fullName>
    </alternativeName>
</protein>
<sequence length="244" mass="26783">MLTSPQPRADGRLADVMRPLQITWDPMGFALSSLIIRTGRTSVLCSVCVEEGVPRWRKGQGKGWLSAEYRLLPGSTPQRQNRELLKLSGRTQEIQRLIGRSLRAVIDMAALGETTLRIDCDVIQADAGTRTASITGAWIALKRGCDRLLEQGLLTHQPVIEQVAAVSVGLVESYPLLDLDYSEDSRADVDLNVVMGSNGHLLELQGTAEGAPFSRNQLNDLLNLAEPGLQHLQAFQRSALMQED</sequence>
<feature type="chain" id="PRO_0000139923" description="Ribonuclease PH">
    <location>
        <begin position="1"/>
        <end position="244"/>
    </location>
</feature>
<feature type="binding site" evidence="1">
    <location>
        <position position="90"/>
    </location>
    <ligand>
        <name>phosphate</name>
        <dbReference type="ChEBI" id="CHEBI:43474"/>
        <note>substrate</note>
    </ligand>
</feature>
<feature type="binding site" evidence="1">
    <location>
        <begin position="128"/>
        <end position="130"/>
    </location>
    <ligand>
        <name>phosphate</name>
        <dbReference type="ChEBI" id="CHEBI:43474"/>
        <note>substrate</note>
    </ligand>
</feature>
<evidence type="ECO:0000255" key="1">
    <source>
        <dbReference type="HAMAP-Rule" id="MF_00564"/>
    </source>
</evidence>
<proteinExistence type="inferred from homology"/>
<comment type="function">
    <text evidence="1">Phosphorolytic 3'-5' exoribonuclease that plays an important role in tRNA 3'-end maturation. Removes nucleotide residues following the 3'-CCA terminus of tRNAs; can also add nucleotides to the ends of RNA molecules by using nucleoside diphosphates as substrates, but this may not be physiologically important. Probably plays a role in initiation of 16S rRNA degradation (leading to ribosome degradation) during starvation.</text>
</comment>
<comment type="catalytic activity">
    <reaction evidence="1">
        <text>tRNA(n+1) + phosphate = tRNA(n) + a ribonucleoside 5'-diphosphate</text>
        <dbReference type="Rhea" id="RHEA:10628"/>
        <dbReference type="Rhea" id="RHEA-COMP:17343"/>
        <dbReference type="Rhea" id="RHEA-COMP:17344"/>
        <dbReference type="ChEBI" id="CHEBI:43474"/>
        <dbReference type="ChEBI" id="CHEBI:57930"/>
        <dbReference type="ChEBI" id="CHEBI:173114"/>
        <dbReference type="EC" id="2.7.7.56"/>
    </reaction>
</comment>
<comment type="subunit">
    <text evidence="1">Homohexameric ring arranged as a trimer of dimers.</text>
</comment>
<comment type="similarity">
    <text evidence="1">Belongs to the RNase PH family.</text>
</comment>
<gene>
    <name evidence="1" type="primary">rph</name>
    <name type="ordered locus">PMT_1830</name>
</gene>
<name>RNPH_PROMM</name>
<reference key="1">
    <citation type="journal article" date="2003" name="Nature">
        <title>Genome divergence in two Prochlorococcus ecotypes reflects oceanic niche differentiation.</title>
        <authorList>
            <person name="Rocap G."/>
            <person name="Larimer F.W."/>
            <person name="Lamerdin J.E."/>
            <person name="Malfatti S."/>
            <person name="Chain P."/>
            <person name="Ahlgren N.A."/>
            <person name="Arellano A."/>
            <person name="Coleman M."/>
            <person name="Hauser L."/>
            <person name="Hess W.R."/>
            <person name="Johnson Z.I."/>
            <person name="Land M.L."/>
            <person name="Lindell D."/>
            <person name="Post A.F."/>
            <person name="Regala W."/>
            <person name="Shah M."/>
            <person name="Shaw S.L."/>
            <person name="Steglich C."/>
            <person name="Sullivan M.B."/>
            <person name="Ting C.S."/>
            <person name="Tolonen A."/>
            <person name="Webb E.A."/>
            <person name="Zinser E.R."/>
            <person name="Chisholm S.W."/>
        </authorList>
    </citation>
    <scope>NUCLEOTIDE SEQUENCE [LARGE SCALE GENOMIC DNA]</scope>
    <source>
        <strain>MIT 9313</strain>
    </source>
</reference>
<keyword id="KW-0548">Nucleotidyltransferase</keyword>
<keyword id="KW-1185">Reference proteome</keyword>
<keyword id="KW-0694">RNA-binding</keyword>
<keyword id="KW-0698">rRNA processing</keyword>
<keyword id="KW-0808">Transferase</keyword>
<keyword id="KW-0819">tRNA processing</keyword>
<keyword id="KW-0820">tRNA-binding</keyword>
<accession>Q7V4V8</accession>
<organism>
    <name type="scientific">Prochlorococcus marinus (strain MIT 9313)</name>
    <dbReference type="NCBI Taxonomy" id="74547"/>
    <lineage>
        <taxon>Bacteria</taxon>
        <taxon>Bacillati</taxon>
        <taxon>Cyanobacteriota</taxon>
        <taxon>Cyanophyceae</taxon>
        <taxon>Synechococcales</taxon>
        <taxon>Prochlorococcaceae</taxon>
        <taxon>Prochlorococcus</taxon>
    </lineage>
</organism>